<sequence>MEVKISTFLQIAVLIVLGIHLIAAGQDTDGKEKSDEYELFTVEYCGTNCTQLENGSWTACTGKNGTCRCFHENDKKVGLCLSTEYTDFSEYPDPNSEEIKAASPLP</sequence>
<proteinExistence type="inferred from homology"/>
<keyword id="KW-1015">Disulfide bond</keyword>
<keyword id="KW-0325">Glycoprotein</keyword>
<keyword id="KW-0964">Secreted</keyword>
<keyword id="KW-0732">Signal</keyword>
<reference evidence="7" key="1">
    <citation type="journal article" date="2013" name="FASEB J.">
        <title>De novo Ixodes ricinus salivary gland transcriptome analysis using two next-generation sequencing methodologies.</title>
        <authorList>
            <person name="Schwarz A."/>
            <person name="von Reumont B.M."/>
            <person name="Erhart J."/>
            <person name="Chagas A.C."/>
            <person name="Ribeiro J.M."/>
            <person name="Kotsyfakis M."/>
        </authorList>
    </citation>
    <scope>NUCLEOTIDE SEQUENCE [LARGE SCALE MRNA]</scope>
    <source>
        <tissue evidence="7">Salivary gland</tissue>
    </source>
</reference>
<reference evidence="6" key="2">
    <citation type="journal article" date="2019" name="J. Biol. Chem.">
        <title>A knottin scaffold directs the CXC-chemokine-binding specificity of tick evasins.</title>
        <authorList>
            <person name="Lee A.W."/>
            <person name="Deruaz M."/>
            <person name="Lynch C."/>
            <person name="Davies G."/>
            <person name="Singh K."/>
            <person name="Alenazi Y."/>
            <person name="Eaton J.R.O."/>
            <person name="Kawamura A."/>
            <person name="Shaw J."/>
            <person name="Proudfoot A.E.I."/>
            <person name="Dias J.M."/>
            <person name="Bhattacharya S."/>
        </authorList>
    </citation>
    <scope>FUNCTION</scope>
</reference>
<protein>
    <recommendedName>
        <fullName evidence="5">Evasin P1168</fullName>
    </recommendedName>
</protein>
<comment type="function">
    <text evidence="4">Salivary chemokine-binding protein which binds to host chemokines CXCL1, CXCL2 and CXCL8.</text>
</comment>
<comment type="subcellular location">
    <subcellularLocation>
        <location evidence="6">Secreted</location>
    </subcellularLocation>
</comment>
<feature type="signal peptide" evidence="2">
    <location>
        <begin position="1"/>
        <end position="24"/>
    </location>
</feature>
<feature type="chain" id="PRO_5005517493" description="Evasin P1168" evidence="2">
    <location>
        <begin position="25"/>
        <end position="106"/>
    </location>
</feature>
<feature type="glycosylation site" description="N-linked (GlcNAc...) asparagine" evidence="3">
    <location>
        <position position="48"/>
    </location>
</feature>
<feature type="glycosylation site" description="N-linked (GlcNAc...) asparagine" evidence="3">
    <location>
        <position position="54"/>
    </location>
</feature>
<feature type="glycosylation site" description="N-linked (GlcNAc...) asparagine" evidence="3">
    <location>
        <position position="64"/>
    </location>
</feature>
<feature type="disulfide bond" evidence="1">
    <location>
        <begin position="45"/>
        <end position="67"/>
    </location>
</feature>
<feature type="disulfide bond" evidence="1">
    <location>
        <begin position="49"/>
        <end position="69"/>
    </location>
</feature>
<feature type="disulfide bond" evidence="1">
    <location>
        <begin position="60"/>
        <end position="80"/>
    </location>
</feature>
<accession>A0A0K8RCU3</accession>
<evidence type="ECO:0000250" key="1">
    <source>
        <dbReference type="UniProtKB" id="P0C8E8"/>
    </source>
</evidence>
<evidence type="ECO:0000255" key="2"/>
<evidence type="ECO:0000255" key="3">
    <source>
        <dbReference type="PROSITE-ProRule" id="PRU00498"/>
    </source>
</evidence>
<evidence type="ECO:0000269" key="4">
    <source>
    </source>
</evidence>
<evidence type="ECO:0000303" key="5">
    <source>
    </source>
</evidence>
<evidence type="ECO:0000305" key="6"/>
<evidence type="ECO:0000312" key="7">
    <source>
        <dbReference type="EMBL" id="JAA68901.1"/>
    </source>
</evidence>
<organism evidence="7">
    <name type="scientific">Ixodes ricinus</name>
    <name type="common">Common tick</name>
    <name type="synonym">Acarus ricinus</name>
    <dbReference type="NCBI Taxonomy" id="34613"/>
    <lineage>
        <taxon>Eukaryota</taxon>
        <taxon>Metazoa</taxon>
        <taxon>Ecdysozoa</taxon>
        <taxon>Arthropoda</taxon>
        <taxon>Chelicerata</taxon>
        <taxon>Arachnida</taxon>
        <taxon>Acari</taxon>
        <taxon>Parasitiformes</taxon>
        <taxon>Ixodida</taxon>
        <taxon>Ixodoidea</taxon>
        <taxon>Ixodidae</taxon>
        <taxon>Ixodinae</taxon>
        <taxon>Ixodes</taxon>
    </lineage>
</organism>
<name>E1168_IXORI</name>
<dbReference type="EMBL" id="GADI01004907">
    <property type="protein sequence ID" value="JAA68901.1"/>
    <property type="molecule type" value="mRNA"/>
</dbReference>
<dbReference type="SMR" id="A0A0K8RCU3"/>
<dbReference type="GO" id="GO:0005576">
    <property type="term" value="C:extracellular region"/>
    <property type="evidence" value="ECO:0007669"/>
    <property type="project" value="UniProtKB-SubCell"/>
</dbReference>
<dbReference type="GO" id="GO:0019958">
    <property type="term" value="F:C-X-C chemokine binding"/>
    <property type="evidence" value="ECO:0000314"/>
    <property type="project" value="UniProtKB"/>
</dbReference>